<gene>
    <name evidence="1" type="primary">fbp</name>
    <name type="synonym">cbbFII</name>
    <name type="ordered locus">RCAP_rcc01834</name>
</gene>
<accession>O34011</accession>
<accession>D5AUE0</accession>
<evidence type="ECO:0000255" key="1">
    <source>
        <dbReference type="HAMAP-Rule" id="MF_01855"/>
    </source>
</evidence>
<evidence type="ECO:0000305" key="2"/>
<comment type="catalytic activity">
    <reaction evidence="1">
        <text>beta-D-fructose 1,6-bisphosphate + H2O = beta-D-fructose 6-phosphate + phosphate</text>
        <dbReference type="Rhea" id="RHEA:11064"/>
        <dbReference type="ChEBI" id="CHEBI:15377"/>
        <dbReference type="ChEBI" id="CHEBI:32966"/>
        <dbReference type="ChEBI" id="CHEBI:43474"/>
        <dbReference type="ChEBI" id="CHEBI:57634"/>
        <dbReference type="EC" id="3.1.3.11"/>
    </reaction>
</comment>
<comment type="cofactor">
    <cofactor evidence="1">
        <name>Mg(2+)</name>
        <dbReference type="ChEBI" id="CHEBI:18420"/>
    </cofactor>
    <text evidence="1">Binds 2 magnesium ions per subunit.</text>
</comment>
<comment type="pathway">
    <text evidence="1">Carbohydrate biosynthesis; gluconeogenesis.</text>
</comment>
<comment type="subunit">
    <text evidence="1">Homotetramer.</text>
</comment>
<comment type="subcellular location">
    <subcellularLocation>
        <location evidence="1">Cytoplasm</location>
    </subcellularLocation>
</comment>
<comment type="miscellaneous">
    <text>There are two genes for FBPase in R.capsulatus.</text>
</comment>
<comment type="similarity">
    <text evidence="1">Belongs to the FBPase class 1 family.</text>
</comment>
<proteinExistence type="inferred from homology"/>
<name>F16PA_RHOCB</name>
<reference key="1">
    <citation type="submission" date="1997-01" db="EMBL/GenBank/DDBJ databases">
        <authorList>
            <person name="Paoli G.C."/>
            <person name="Tabita F.R."/>
        </authorList>
    </citation>
    <scope>NUCLEOTIDE SEQUENCE [GENOMIC DNA]</scope>
    <source>
        <strain>ATCC BAA-309 / NBRC 16581 / SB1003</strain>
    </source>
</reference>
<reference key="2">
    <citation type="journal article" date="2010" name="J. Bacteriol.">
        <title>Complete genome sequence of the photosynthetic purple nonsulfur bacterium Rhodobacter capsulatus SB 1003.</title>
        <authorList>
            <person name="Strnad H."/>
            <person name="Lapidus A."/>
            <person name="Paces J."/>
            <person name="Ulbrich P."/>
            <person name="Vlcek C."/>
            <person name="Paces V."/>
            <person name="Haselkorn R."/>
        </authorList>
    </citation>
    <scope>NUCLEOTIDE SEQUENCE [LARGE SCALE GENOMIC DNA]</scope>
    <source>
        <strain>ATCC BAA-309 / NBRC 16581 / SB1003</strain>
    </source>
</reference>
<sequence length="331" mass="35566">MAIELEGLGLSPELADVMTRLARVGADLARTIARNGVETDLAAGVGTNAGGDGQKALDVMADDAFREALTGTAVAYYASEEQDEVVTLGKGTLALAIDPLDGSSNIDVNVSIGTIFSIFPATDDPNTSFLRKGSEQIAGGYIIYGPQCALVCSFGRGVHHWVLDLDSRSFKRLPDIKALPQDTSEYAINASNYRHWPSPIRAFIDDLVAGAEGPRGRNFNMRWIASLVAETHRILMRGGVFLYPGDERKGYARGRLRHVYECAPIAFLITQVGGGATDGCEDILSALPDKLHARTPFVFGCAAKVARVTAYHDLPGEETSALFNTRGLFRS</sequence>
<dbReference type="EC" id="3.1.3.11" evidence="1"/>
<dbReference type="EMBL" id="U87282">
    <property type="protein sequence ID" value="AAC32305.1"/>
    <property type="molecule type" value="Genomic_DNA"/>
</dbReference>
<dbReference type="EMBL" id="CP001312">
    <property type="protein sequence ID" value="ADE85579.1"/>
    <property type="molecule type" value="Genomic_DNA"/>
</dbReference>
<dbReference type="RefSeq" id="WP_013067558.1">
    <property type="nucleotide sequence ID" value="NC_014034.1"/>
</dbReference>
<dbReference type="SMR" id="O34011"/>
<dbReference type="STRING" id="272942.RCAP_rcc01834"/>
<dbReference type="GeneID" id="31490709"/>
<dbReference type="KEGG" id="rcp:RCAP_rcc01834"/>
<dbReference type="eggNOG" id="COG0158">
    <property type="taxonomic scope" value="Bacteria"/>
</dbReference>
<dbReference type="HOGENOM" id="CLU_039977_0_0_5"/>
<dbReference type="OrthoDB" id="9806756at2"/>
<dbReference type="UniPathway" id="UPA00138"/>
<dbReference type="Proteomes" id="UP000002361">
    <property type="component" value="Chromosome"/>
</dbReference>
<dbReference type="GO" id="GO:0005829">
    <property type="term" value="C:cytosol"/>
    <property type="evidence" value="ECO:0007669"/>
    <property type="project" value="TreeGrafter"/>
</dbReference>
<dbReference type="GO" id="GO:0042132">
    <property type="term" value="F:fructose 1,6-bisphosphate 1-phosphatase activity"/>
    <property type="evidence" value="ECO:0007669"/>
    <property type="project" value="UniProtKB-UniRule"/>
</dbReference>
<dbReference type="GO" id="GO:0000287">
    <property type="term" value="F:magnesium ion binding"/>
    <property type="evidence" value="ECO:0007669"/>
    <property type="project" value="UniProtKB-UniRule"/>
</dbReference>
<dbReference type="GO" id="GO:0030388">
    <property type="term" value="P:fructose 1,6-bisphosphate metabolic process"/>
    <property type="evidence" value="ECO:0007669"/>
    <property type="project" value="TreeGrafter"/>
</dbReference>
<dbReference type="GO" id="GO:0006002">
    <property type="term" value="P:fructose 6-phosphate metabolic process"/>
    <property type="evidence" value="ECO:0007669"/>
    <property type="project" value="TreeGrafter"/>
</dbReference>
<dbReference type="GO" id="GO:0006000">
    <property type="term" value="P:fructose metabolic process"/>
    <property type="evidence" value="ECO:0007669"/>
    <property type="project" value="TreeGrafter"/>
</dbReference>
<dbReference type="GO" id="GO:0006094">
    <property type="term" value="P:gluconeogenesis"/>
    <property type="evidence" value="ECO:0007669"/>
    <property type="project" value="UniProtKB-UniRule"/>
</dbReference>
<dbReference type="GO" id="GO:0019253">
    <property type="term" value="P:reductive pentose-phosphate cycle"/>
    <property type="evidence" value="ECO:0007669"/>
    <property type="project" value="UniProtKB-UniRule"/>
</dbReference>
<dbReference type="GO" id="GO:0005986">
    <property type="term" value="P:sucrose biosynthetic process"/>
    <property type="evidence" value="ECO:0007669"/>
    <property type="project" value="TreeGrafter"/>
</dbReference>
<dbReference type="CDD" id="cd00354">
    <property type="entry name" value="FBPase"/>
    <property type="match status" value="1"/>
</dbReference>
<dbReference type="Gene3D" id="3.40.190.80">
    <property type="match status" value="1"/>
</dbReference>
<dbReference type="Gene3D" id="3.30.540.10">
    <property type="entry name" value="Fructose-1,6-Bisphosphatase, subunit A, domain 1"/>
    <property type="match status" value="1"/>
</dbReference>
<dbReference type="HAMAP" id="MF_01855">
    <property type="entry name" value="FBPase_class1"/>
    <property type="match status" value="1"/>
</dbReference>
<dbReference type="InterPro" id="IPR044015">
    <property type="entry name" value="FBPase_C_dom"/>
</dbReference>
<dbReference type="InterPro" id="IPR000146">
    <property type="entry name" value="FBPase_class-1"/>
</dbReference>
<dbReference type="InterPro" id="IPR033391">
    <property type="entry name" value="FBPase_N"/>
</dbReference>
<dbReference type="InterPro" id="IPR028343">
    <property type="entry name" value="FBPtase"/>
</dbReference>
<dbReference type="InterPro" id="IPR020548">
    <property type="entry name" value="Fructose_bisphosphatase_AS"/>
</dbReference>
<dbReference type="NCBIfam" id="NF006780">
    <property type="entry name" value="PRK09293.1-4"/>
    <property type="match status" value="1"/>
</dbReference>
<dbReference type="PANTHER" id="PTHR11556">
    <property type="entry name" value="FRUCTOSE-1,6-BISPHOSPHATASE-RELATED"/>
    <property type="match status" value="1"/>
</dbReference>
<dbReference type="PANTHER" id="PTHR11556:SF35">
    <property type="entry name" value="SEDOHEPTULOSE-1,7-BISPHOSPHATASE, CHLOROPLASTIC"/>
    <property type="match status" value="1"/>
</dbReference>
<dbReference type="Pfam" id="PF00316">
    <property type="entry name" value="FBPase"/>
    <property type="match status" value="1"/>
</dbReference>
<dbReference type="Pfam" id="PF18913">
    <property type="entry name" value="FBPase_C"/>
    <property type="match status" value="1"/>
</dbReference>
<dbReference type="PIRSF" id="PIRSF500210">
    <property type="entry name" value="FBPtase"/>
    <property type="match status" value="1"/>
</dbReference>
<dbReference type="PIRSF" id="PIRSF000904">
    <property type="entry name" value="FBPtase_SBPase"/>
    <property type="match status" value="1"/>
</dbReference>
<dbReference type="PRINTS" id="PR00115">
    <property type="entry name" value="F16BPHPHTASE"/>
</dbReference>
<dbReference type="SUPFAM" id="SSF56655">
    <property type="entry name" value="Carbohydrate phosphatase"/>
    <property type="match status" value="1"/>
</dbReference>
<dbReference type="PROSITE" id="PS00124">
    <property type="entry name" value="FBPASE"/>
    <property type="match status" value="1"/>
</dbReference>
<protein>
    <recommendedName>
        <fullName evidence="1">Fructose-1,6-bisphosphatase class 1</fullName>
        <shortName evidence="1">FBPase class 1</shortName>
        <ecNumber evidence="1">3.1.3.11</ecNumber>
    </recommendedName>
    <alternativeName>
        <fullName evidence="1">D-fructose-1,6-bisphosphate 1-phosphohydrolase class 1</fullName>
    </alternativeName>
</protein>
<organism>
    <name type="scientific">Rhodobacter capsulatus (strain ATCC BAA-309 / NBRC 16581 / SB1003)</name>
    <dbReference type="NCBI Taxonomy" id="272942"/>
    <lineage>
        <taxon>Bacteria</taxon>
        <taxon>Pseudomonadati</taxon>
        <taxon>Pseudomonadota</taxon>
        <taxon>Alphaproteobacteria</taxon>
        <taxon>Rhodobacterales</taxon>
        <taxon>Rhodobacter group</taxon>
        <taxon>Rhodobacter</taxon>
    </lineage>
</organism>
<feature type="chain" id="PRO_0000200486" description="Fructose-1,6-bisphosphatase class 1">
    <location>
        <begin position="1"/>
        <end position="331"/>
    </location>
</feature>
<feature type="binding site" evidence="1">
    <location>
        <position position="80"/>
    </location>
    <ligand>
        <name>Mg(2+)</name>
        <dbReference type="ChEBI" id="CHEBI:18420"/>
        <label>1</label>
    </ligand>
</feature>
<feature type="binding site" evidence="1">
    <location>
        <position position="98"/>
    </location>
    <ligand>
        <name>Mg(2+)</name>
        <dbReference type="ChEBI" id="CHEBI:18420"/>
        <label>1</label>
    </ligand>
</feature>
<feature type="binding site" evidence="1">
    <location>
        <position position="98"/>
    </location>
    <ligand>
        <name>Mg(2+)</name>
        <dbReference type="ChEBI" id="CHEBI:18420"/>
        <label>2</label>
    </ligand>
</feature>
<feature type="binding site" evidence="1">
    <location>
        <position position="100"/>
    </location>
    <ligand>
        <name>Mg(2+)</name>
        <dbReference type="ChEBI" id="CHEBI:18420"/>
        <label>1</label>
    </ligand>
</feature>
<feature type="binding site" evidence="1">
    <location>
        <begin position="101"/>
        <end position="104"/>
    </location>
    <ligand>
        <name>substrate</name>
    </ligand>
</feature>
<feature type="binding site" evidence="1">
    <location>
        <position position="101"/>
    </location>
    <ligand>
        <name>Mg(2+)</name>
        <dbReference type="ChEBI" id="CHEBI:18420"/>
        <label>2</label>
    </ligand>
</feature>
<feature type="binding site" evidence="1">
    <location>
        <position position="189"/>
    </location>
    <ligand>
        <name>substrate</name>
    </ligand>
</feature>
<feature type="binding site" evidence="1">
    <location>
        <position position="261"/>
    </location>
    <ligand>
        <name>Mg(2+)</name>
        <dbReference type="ChEBI" id="CHEBI:18420"/>
        <label>2</label>
    </ligand>
</feature>
<feature type="sequence conflict" description="In Ref. 1; AAC32305." evidence="2" ref="1">
    <original>E</original>
    <variation>Q</variation>
    <location>
        <position position="317"/>
    </location>
</feature>
<feature type="sequence conflict" description="In Ref. 1; AAC32305." evidence="2" ref="1">
    <original>L</original>
    <variation>P</variation>
    <location>
        <position position="322"/>
    </location>
</feature>
<keyword id="KW-0119">Carbohydrate metabolism</keyword>
<keyword id="KW-0963">Cytoplasm</keyword>
<keyword id="KW-0378">Hydrolase</keyword>
<keyword id="KW-0460">Magnesium</keyword>
<keyword id="KW-0479">Metal-binding</keyword>
<keyword id="KW-1185">Reference proteome</keyword>